<proteinExistence type="inferred from homology"/>
<keyword id="KW-0067">ATP-binding</keyword>
<keyword id="KW-0418">Kinase</keyword>
<keyword id="KW-0545">Nucleotide biosynthesis</keyword>
<keyword id="KW-0547">Nucleotide-binding</keyword>
<keyword id="KW-0808">Transferase</keyword>
<name>KTHY_HALS3</name>
<feature type="chain" id="PRO_1000097400" description="Probable thymidylate kinase">
    <location>
        <begin position="1"/>
        <end position="199"/>
    </location>
</feature>
<feature type="binding site" evidence="1">
    <location>
        <begin position="7"/>
        <end position="14"/>
    </location>
    <ligand>
        <name>ATP</name>
        <dbReference type="ChEBI" id="CHEBI:30616"/>
    </ligand>
</feature>
<dbReference type="EC" id="2.7.4.9" evidence="1"/>
<dbReference type="EMBL" id="AM774415">
    <property type="protein sequence ID" value="CAP14412.1"/>
    <property type="molecule type" value="Genomic_DNA"/>
</dbReference>
<dbReference type="RefSeq" id="WP_010903416.1">
    <property type="nucleotide sequence ID" value="NC_010364.1"/>
</dbReference>
<dbReference type="SMR" id="B0R6P3"/>
<dbReference type="EnsemblBacteria" id="CAP14412">
    <property type="protein sequence ID" value="CAP14412"/>
    <property type="gene ID" value="OE_3715R"/>
</dbReference>
<dbReference type="GeneID" id="89350127"/>
<dbReference type="KEGG" id="hsl:OE_3715R"/>
<dbReference type="HOGENOM" id="CLU_049131_0_2_2"/>
<dbReference type="PhylomeDB" id="B0R6P3"/>
<dbReference type="Proteomes" id="UP000001321">
    <property type="component" value="Chromosome"/>
</dbReference>
<dbReference type="GO" id="GO:0005737">
    <property type="term" value="C:cytoplasm"/>
    <property type="evidence" value="ECO:0007669"/>
    <property type="project" value="TreeGrafter"/>
</dbReference>
<dbReference type="GO" id="GO:0005524">
    <property type="term" value="F:ATP binding"/>
    <property type="evidence" value="ECO:0007669"/>
    <property type="project" value="UniProtKB-UniRule"/>
</dbReference>
<dbReference type="GO" id="GO:0004798">
    <property type="term" value="F:dTMP kinase activity"/>
    <property type="evidence" value="ECO:0007669"/>
    <property type="project" value="UniProtKB-UniRule"/>
</dbReference>
<dbReference type="GO" id="GO:0006233">
    <property type="term" value="P:dTDP biosynthetic process"/>
    <property type="evidence" value="ECO:0007669"/>
    <property type="project" value="InterPro"/>
</dbReference>
<dbReference type="GO" id="GO:0006235">
    <property type="term" value="P:dTTP biosynthetic process"/>
    <property type="evidence" value="ECO:0007669"/>
    <property type="project" value="UniProtKB-UniRule"/>
</dbReference>
<dbReference type="GO" id="GO:0006227">
    <property type="term" value="P:dUDP biosynthetic process"/>
    <property type="evidence" value="ECO:0007669"/>
    <property type="project" value="TreeGrafter"/>
</dbReference>
<dbReference type="CDD" id="cd01672">
    <property type="entry name" value="TMPK"/>
    <property type="match status" value="1"/>
</dbReference>
<dbReference type="Gene3D" id="3.40.50.300">
    <property type="entry name" value="P-loop containing nucleotide triphosphate hydrolases"/>
    <property type="match status" value="1"/>
</dbReference>
<dbReference type="HAMAP" id="MF_00165">
    <property type="entry name" value="Thymidylate_kinase"/>
    <property type="match status" value="1"/>
</dbReference>
<dbReference type="InterPro" id="IPR027417">
    <property type="entry name" value="P-loop_NTPase"/>
</dbReference>
<dbReference type="InterPro" id="IPR039430">
    <property type="entry name" value="Thymidylate_kin-like_dom"/>
</dbReference>
<dbReference type="InterPro" id="IPR018094">
    <property type="entry name" value="Thymidylate_kinase"/>
</dbReference>
<dbReference type="NCBIfam" id="TIGR00041">
    <property type="entry name" value="DTMP_kinase"/>
    <property type="match status" value="1"/>
</dbReference>
<dbReference type="PANTHER" id="PTHR10344">
    <property type="entry name" value="THYMIDYLATE KINASE"/>
    <property type="match status" value="1"/>
</dbReference>
<dbReference type="PANTHER" id="PTHR10344:SF4">
    <property type="entry name" value="UMP-CMP KINASE 2, MITOCHONDRIAL"/>
    <property type="match status" value="1"/>
</dbReference>
<dbReference type="Pfam" id="PF02223">
    <property type="entry name" value="Thymidylate_kin"/>
    <property type="match status" value="1"/>
</dbReference>
<dbReference type="SUPFAM" id="SSF52540">
    <property type="entry name" value="P-loop containing nucleoside triphosphate hydrolases"/>
    <property type="match status" value="1"/>
</dbReference>
<evidence type="ECO:0000255" key="1">
    <source>
        <dbReference type="HAMAP-Rule" id="MF_00165"/>
    </source>
</evidence>
<reference key="1">
    <citation type="journal article" date="2008" name="Genomics">
        <title>Evolution in the laboratory: the genome of Halobacterium salinarum strain R1 compared to that of strain NRC-1.</title>
        <authorList>
            <person name="Pfeiffer F."/>
            <person name="Schuster S.C."/>
            <person name="Broicher A."/>
            <person name="Falb M."/>
            <person name="Palm P."/>
            <person name="Rodewald K."/>
            <person name="Ruepp A."/>
            <person name="Soppa J."/>
            <person name="Tittor J."/>
            <person name="Oesterhelt D."/>
        </authorList>
    </citation>
    <scope>NUCLEOTIDE SEQUENCE [LARGE SCALE GENOMIC DNA]</scope>
    <source>
        <strain>ATCC 29341 / DSM 671 / R1</strain>
    </source>
</reference>
<accession>B0R6P3</accession>
<organism>
    <name type="scientific">Halobacterium salinarum (strain ATCC 29341 / DSM 671 / R1)</name>
    <dbReference type="NCBI Taxonomy" id="478009"/>
    <lineage>
        <taxon>Archaea</taxon>
        <taxon>Methanobacteriati</taxon>
        <taxon>Methanobacteriota</taxon>
        <taxon>Stenosarchaea group</taxon>
        <taxon>Halobacteria</taxon>
        <taxon>Halobacteriales</taxon>
        <taxon>Halobacteriaceae</taxon>
        <taxon>Halobacterium</taxon>
        <taxon>Halobacterium salinarum NRC-34001</taxon>
    </lineage>
</organism>
<gene>
    <name evidence="1" type="primary">tmk</name>
    <name type="ordered locus">OE_3715R</name>
</gene>
<sequence>MLVTLEGLDGSGKTTVWESLRASHDDGVTFTAEPTDSQYGQAVRRSESAADADPIAELFLFTADHADHLSRVVSPALDRGDVVISDRYSDSRYAYQGATLADTVPRAMEYVRGIHQPWTRPPDVTLYFDVDPDTGAARSGATNKFETAAFLADVRANYEQLIDYTPERFVRIDATQSPEAVIADAEAALADALPDDAWA</sequence>
<comment type="catalytic activity">
    <reaction evidence="1">
        <text>dTMP + ATP = dTDP + ADP</text>
        <dbReference type="Rhea" id="RHEA:13517"/>
        <dbReference type="ChEBI" id="CHEBI:30616"/>
        <dbReference type="ChEBI" id="CHEBI:58369"/>
        <dbReference type="ChEBI" id="CHEBI:63528"/>
        <dbReference type="ChEBI" id="CHEBI:456216"/>
        <dbReference type="EC" id="2.7.4.9"/>
    </reaction>
</comment>
<comment type="similarity">
    <text evidence="1">Belongs to the thymidylate kinase family.</text>
</comment>
<protein>
    <recommendedName>
        <fullName evidence="1">Probable thymidylate kinase</fullName>
        <ecNumber evidence="1">2.7.4.9</ecNumber>
    </recommendedName>
    <alternativeName>
        <fullName evidence="1">dTMP kinase</fullName>
    </alternativeName>
</protein>